<reference key="1">
    <citation type="journal article" date="2004" name="Science">
        <title>The Ashbya gossypii genome as a tool for mapping the ancient Saccharomyces cerevisiae genome.</title>
        <authorList>
            <person name="Dietrich F.S."/>
            <person name="Voegeli S."/>
            <person name="Brachat S."/>
            <person name="Lerch A."/>
            <person name="Gates K."/>
            <person name="Steiner S."/>
            <person name="Mohr C."/>
            <person name="Poehlmann R."/>
            <person name="Luedi P."/>
            <person name="Choi S."/>
            <person name="Wing R.A."/>
            <person name="Flavier A."/>
            <person name="Gaffney T.D."/>
            <person name="Philippsen P."/>
        </authorList>
    </citation>
    <scope>NUCLEOTIDE SEQUENCE [LARGE SCALE GENOMIC DNA]</scope>
    <source>
        <strain>ATCC 10895 / CBS 109.51 / FGSC 9923 / NRRL Y-1056</strain>
    </source>
</reference>
<reference key="2">
    <citation type="journal article" date="2013" name="G3 (Bethesda)">
        <title>Genomes of Ashbya fungi isolated from insects reveal four mating-type loci, numerous translocations, lack of transposons, and distinct gene duplications.</title>
        <authorList>
            <person name="Dietrich F.S."/>
            <person name="Voegeli S."/>
            <person name="Kuo S."/>
            <person name="Philippsen P."/>
        </authorList>
    </citation>
    <scope>GENOME REANNOTATION</scope>
    <scope>SEQUENCE REVISION TO 52</scope>
    <source>
        <strain>ATCC 10895 / CBS 109.51 / FGSC 9923 / NRRL Y-1056</strain>
    </source>
</reference>
<organism>
    <name type="scientific">Eremothecium gossypii (strain ATCC 10895 / CBS 109.51 / FGSC 9923 / NRRL Y-1056)</name>
    <name type="common">Yeast</name>
    <name type="synonym">Ashbya gossypii</name>
    <dbReference type="NCBI Taxonomy" id="284811"/>
    <lineage>
        <taxon>Eukaryota</taxon>
        <taxon>Fungi</taxon>
        <taxon>Dikarya</taxon>
        <taxon>Ascomycota</taxon>
        <taxon>Saccharomycotina</taxon>
        <taxon>Saccharomycetes</taxon>
        <taxon>Saccharomycetales</taxon>
        <taxon>Saccharomycetaceae</taxon>
        <taxon>Eremothecium</taxon>
    </lineage>
</organism>
<sequence>MNALYNHAVKQKKLLEQELNRFELGVAAPVGLQGSISTALVGLERTIEQYQAQVAQTGSGAEAGKHAQRVGELTECAASARRRFEGLRAASMQPVAFQSGAAAPEGAVSQRAAGARTTINSAGGLPLYEGLRREQNMLARGNARLDSILQMGQESLEDMVEQHRILQRVAERMQGSLRTLGVSDATIERIGRRVKKDKAIFWSSLTLLVVGVYYVLRIFG</sequence>
<evidence type="ECO:0000250" key="1"/>
<evidence type="ECO:0000255" key="2"/>
<evidence type="ECO:0000305" key="3"/>
<feature type="chain" id="PRO_0000207551" description="Protein transport protein BOS1">
    <location>
        <begin position="1"/>
        <end position="220"/>
    </location>
</feature>
<feature type="topological domain" description="Cytoplasmic" evidence="2">
    <location>
        <begin position="1"/>
        <end position="198"/>
    </location>
</feature>
<feature type="transmembrane region" description="Helical; Anchor for type IV membrane protein" evidence="2">
    <location>
        <begin position="199"/>
        <end position="219"/>
    </location>
</feature>
<feature type="topological domain" description="Vesicular" evidence="2">
    <location>
        <position position="220"/>
    </location>
</feature>
<accession>Q75CY3</accession>
<gene>
    <name type="primary">BOS1</name>
    <name type="ordered locus">ABR239C</name>
</gene>
<name>BOS1_EREGS</name>
<dbReference type="EMBL" id="AE016815">
    <property type="protein sequence ID" value="AAS51012.2"/>
    <property type="molecule type" value="Genomic_DNA"/>
</dbReference>
<dbReference type="RefSeq" id="NP_983188.2">
    <property type="nucleotide sequence ID" value="NM_208541.2"/>
</dbReference>
<dbReference type="SMR" id="Q75CY3"/>
<dbReference type="FunCoup" id="Q75CY3">
    <property type="interactions" value="74"/>
</dbReference>
<dbReference type="STRING" id="284811.Q75CY3"/>
<dbReference type="EnsemblFungi" id="AAS51012">
    <property type="protein sequence ID" value="AAS51012"/>
    <property type="gene ID" value="AGOS_ABR239C"/>
</dbReference>
<dbReference type="GeneID" id="4619298"/>
<dbReference type="KEGG" id="ago:AGOS_ABR239C"/>
<dbReference type="eggNOG" id="KOG3251">
    <property type="taxonomic scope" value="Eukaryota"/>
</dbReference>
<dbReference type="HOGENOM" id="CLU_078260_1_0_1"/>
<dbReference type="InParanoid" id="Q75CY3"/>
<dbReference type="OMA" id="DETIHNI"/>
<dbReference type="OrthoDB" id="158360at2759"/>
<dbReference type="Proteomes" id="UP000000591">
    <property type="component" value="Chromosome II"/>
</dbReference>
<dbReference type="GO" id="GO:0005789">
    <property type="term" value="C:endoplasmic reticulum membrane"/>
    <property type="evidence" value="ECO:0000318"/>
    <property type="project" value="GO_Central"/>
</dbReference>
<dbReference type="GO" id="GO:0012507">
    <property type="term" value="C:ER to Golgi transport vesicle membrane"/>
    <property type="evidence" value="ECO:0000318"/>
    <property type="project" value="GO_Central"/>
</dbReference>
<dbReference type="GO" id="GO:0005794">
    <property type="term" value="C:Golgi apparatus"/>
    <property type="evidence" value="ECO:0000318"/>
    <property type="project" value="GO_Central"/>
</dbReference>
<dbReference type="GO" id="GO:0000139">
    <property type="term" value="C:Golgi membrane"/>
    <property type="evidence" value="ECO:0007669"/>
    <property type="project" value="UniProtKB-SubCell"/>
</dbReference>
<dbReference type="GO" id="GO:0031902">
    <property type="term" value="C:late endosome membrane"/>
    <property type="evidence" value="ECO:0000318"/>
    <property type="project" value="GO_Central"/>
</dbReference>
<dbReference type="GO" id="GO:0031201">
    <property type="term" value="C:SNARE complex"/>
    <property type="evidence" value="ECO:0000318"/>
    <property type="project" value="GO_Central"/>
</dbReference>
<dbReference type="GO" id="GO:0005484">
    <property type="term" value="F:SNAP receptor activity"/>
    <property type="evidence" value="ECO:0000318"/>
    <property type="project" value="GO_Central"/>
</dbReference>
<dbReference type="GO" id="GO:0000149">
    <property type="term" value="F:SNARE binding"/>
    <property type="evidence" value="ECO:0000318"/>
    <property type="project" value="GO_Central"/>
</dbReference>
<dbReference type="GO" id="GO:0006888">
    <property type="term" value="P:endoplasmic reticulum to Golgi vesicle-mediated transport"/>
    <property type="evidence" value="ECO:0000318"/>
    <property type="project" value="GO_Central"/>
</dbReference>
<dbReference type="GO" id="GO:0006886">
    <property type="term" value="P:intracellular protein transport"/>
    <property type="evidence" value="ECO:0007669"/>
    <property type="project" value="EnsemblFungi"/>
</dbReference>
<dbReference type="GO" id="GO:0006906">
    <property type="term" value="P:vesicle fusion"/>
    <property type="evidence" value="ECO:0000318"/>
    <property type="project" value="GO_Central"/>
</dbReference>
<dbReference type="GO" id="GO:0048280">
    <property type="term" value="P:vesicle fusion with Golgi apparatus"/>
    <property type="evidence" value="ECO:0007669"/>
    <property type="project" value="EnsemblFungi"/>
</dbReference>
<dbReference type="Gene3D" id="1.20.5.110">
    <property type="match status" value="1"/>
</dbReference>
<dbReference type="InterPro" id="IPR027027">
    <property type="entry name" value="GOSR2/Membrin/Bos1"/>
</dbReference>
<dbReference type="Pfam" id="PF12352">
    <property type="entry name" value="V-SNARE_C"/>
    <property type="match status" value="1"/>
</dbReference>
<dbReference type="PIRSF" id="PIRSF028865">
    <property type="entry name" value="Membrin-2"/>
    <property type="match status" value="1"/>
</dbReference>
<proteinExistence type="inferred from homology"/>
<protein>
    <recommendedName>
        <fullName>Protein transport protein BOS1</fullName>
    </recommendedName>
</protein>
<comment type="function">
    <text evidence="1">SNARE required for protein transport between the ER and the Golgi complex.</text>
</comment>
<comment type="subcellular location">
    <subcellularLocation>
        <location evidence="1">Golgi apparatus membrane</location>
        <topology evidence="1">Single-pass type IV membrane protein</topology>
    </subcellularLocation>
    <subcellularLocation>
        <location evidence="1">Endoplasmic reticulum membrane</location>
        <topology evidence="1">Single-pass type IV membrane protein</topology>
    </subcellularLocation>
</comment>
<comment type="similarity">
    <text evidence="3">Belongs to the BOS1 family.</text>
</comment>
<keyword id="KW-0256">Endoplasmic reticulum</keyword>
<keyword id="KW-0931">ER-Golgi transport</keyword>
<keyword id="KW-0333">Golgi apparatus</keyword>
<keyword id="KW-0472">Membrane</keyword>
<keyword id="KW-0653">Protein transport</keyword>
<keyword id="KW-1185">Reference proteome</keyword>
<keyword id="KW-0812">Transmembrane</keyword>
<keyword id="KW-1133">Transmembrane helix</keyword>
<keyword id="KW-0813">Transport</keyword>